<keyword id="KW-0030">Aminoacyl-tRNA synthetase</keyword>
<keyword id="KW-0067">ATP-binding</keyword>
<keyword id="KW-0963">Cytoplasm</keyword>
<keyword id="KW-0436">Ligase</keyword>
<keyword id="KW-0547">Nucleotide-binding</keyword>
<keyword id="KW-0648">Protein biosynthesis</keyword>
<name>SYL_STAAB</name>
<dbReference type="EC" id="6.1.1.4" evidence="1"/>
<dbReference type="EMBL" id="AJ938182">
    <property type="protein sequence ID" value="CAI81307.1"/>
    <property type="molecule type" value="Genomic_DNA"/>
</dbReference>
<dbReference type="SMR" id="Q2YTH9"/>
<dbReference type="KEGG" id="sab:SAB1618c"/>
<dbReference type="HOGENOM" id="CLU_004427_0_0_9"/>
<dbReference type="GO" id="GO:0005829">
    <property type="term" value="C:cytosol"/>
    <property type="evidence" value="ECO:0007669"/>
    <property type="project" value="TreeGrafter"/>
</dbReference>
<dbReference type="GO" id="GO:0002161">
    <property type="term" value="F:aminoacyl-tRNA deacylase activity"/>
    <property type="evidence" value="ECO:0007669"/>
    <property type="project" value="InterPro"/>
</dbReference>
<dbReference type="GO" id="GO:0005524">
    <property type="term" value="F:ATP binding"/>
    <property type="evidence" value="ECO:0007669"/>
    <property type="project" value="UniProtKB-UniRule"/>
</dbReference>
<dbReference type="GO" id="GO:0004823">
    <property type="term" value="F:leucine-tRNA ligase activity"/>
    <property type="evidence" value="ECO:0007669"/>
    <property type="project" value="UniProtKB-UniRule"/>
</dbReference>
<dbReference type="GO" id="GO:0006429">
    <property type="term" value="P:leucyl-tRNA aminoacylation"/>
    <property type="evidence" value="ECO:0007669"/>
    <property type="project" value="UniProtKB-UniRule"/>
</dbReference>
<dbReference type="CDD" id="cd07958">
    <property type="entry name" value="Anticodon_Ia_Leu_BEm"/>
    <property type="match status" value="1"/>
</dbReference>
<dbReference type="CDD" id="cd00812">
    <property type="entry name" value="LeuRS_core"/>
    <property type="match status" value="1"/>
</dbReference>
<dbReference type="FunFam" id="1.10.730.10:FF:000012">
    <property type="entry name" value="Leucine--tRNA ligase"/>
    <property type="match status" value="1"/>
</dbReference>
<dbReference type="FunFam" id="1.10.730.10:FF:000018">
    <property type="entry name" value="Leucine--tRNA ligase"/>
    <property type="match status" value="1"/>
</dbReference>
<dbReference type="FunFam" id="3.10.20.590:FF:000001">
    <property type="entry name" value="Leucine--tRNA ligase"/>
    <property type="match status" value="1"/>
</dbReference>
<dbReference type="FunFam" id="3.40.50.620:FF:000056">
    <property type="entry name" value="Leucine--tRNA ligase"/>
    <property type="match status" value="1"/>
</dbReference>
<dbReference type="FunFam" id="3.40.50.620:FF:000077">
    <property type="entry name" value="Leucine--tRNA ligase"/>
    <property type="match status" value="1"/>
</dbReference>
<dbReference type="Gene3D" id="3.10.20.590">
    <property type="match status" value="1"/>
</dbReference>
<dbReference type="Gene3D" id="3.40.50.620">
    <property type="entry name" value="HUPs"/>
    <property type="match status" value="2"/>
</dbReference>
<dbReference type="Gene3D" id="1.10.730.10">
    <property type="entry name" value="Isoleucyl-tRNA Synthetase, Domain 1"/>
    <property type="match status" value="1"/>
</dbReference>
<dbReference type="HAMAP" id="MF_00049_B">
    <property type="entry name" value="Leu_tRNA_synth_B"/>
    <property type="match status" value="1"/>
</dbReference>
<dbReference type="InterPro" id="IPR001412">
    <property type="entry name" value="aa-tRNA-synth_I_CS"/>
</dbReference>
<dbReference type="InterPro" id="IPR002300">
    <property type="entry name" value="aa-tRNA-synth_Ia"/>
</dbReference>
<dbReference type="InterPro" id="IPR002302">
    <property type="entry name" value="Leu-tRNA-ligase"/>
</dbReference>
<dbReference type="InterPro" id="IPR025709">
    <property type="entry name" value="Leu_tRNA-synth_edit"/>
</dbReference>
<dbReference type="InterPro" id="IPR013155">
    <property type="entry name" value="M/V/L/I-tRNA-synth_anticd-bd"/>
</dbReference>
<dbReference type="InterPro" id="IPR015413">
    <property type="entry name" value="Methionyl/Leucyl_tRNA_Synth"/>
</dbReference>
<dbReference type="InterPro" id="IPR014729">
    <property type="entry name" value="Rossmann-like_a/b/a_fold"/>
</dbReference>
<dbReference type="InterPro" id="IPR009080">
    <property type="entry name" value="tRNAsynth_Ia_anticodon-bd"/>
</dbReference>
<dbReference type="InterPro" id="IPR009008">
    <property type="entry name" value="Val/Leu/Ile-tRNA-synth_edit"/>
</dbReference>
<dbReference type="NCBIfam" id="TIGR00396">
    <property type="entry name" value="leuS_bact"/>
    <property type="match status" value="1"/>
</dbReference>
<dbReference type="PANTHER" id="PTHR43740:SF2">
    <property type="entry name" value="LEUCINE--TRNA LIGASE, MITOCHONDRIAL"/>
    <property type="match status" value="1"/>
</dbReference>
<dbReference type="PANTHER" id="PTHR43740">
    <property type="entry name" value="LEUCYL-TRNA SYNTHETASE"/>
    <property type="match status" value="1"/>
</dbReference>
<dbReference type="Pfam" id="PF08264">
    <property type="entry name" value="Anticodon_1"/>
    <property type="match status" value="1"/>
</dbReference>
<dbReference type="Pfam" id="PF00133">
    <property type="entry name" value="tRNA-synt_1"/>
    <property type="match status" value="1"/>
</dbReference>
<dbReference type="Pfam" id="PF13603">
    <property type="entry name" value="tRNA-synt_1_2"/>
    <property type="match status" value="1"/>
</dbReference>
<dbReference type="Pfam" id="PF09334">
    <property type="entry name" value="tRNA-synt_1g"/>
    <property type="match status" value="1"/>
</dbReference>
<dbReference type="PRINTS" id="PR00985">
    <property type="entry name" value="TRNASYNTHLEU"/>
</dbReference>
<dbReference type="SUPFAM" id="SSF47323">
    <property type="entry name" value="Anticodon-binding domain of a subclass of class I aminoacyl-tRNA synthetases"/>
    <property type="match status" value="1"/>
</dbReference>
<dbReference type="SUPFAM" id="SSF52374">
    <property type="entry name" value="Nucleotidylyl transferase"/>
    <property type="match status" value="1"/>
</dbReference>
<dbReference type="SUPFAM" id="SSF50677">
    <property type="entry name" value="ValRS/IleRS/LeuRS editing domain"/>
    <property type="match status" value="1"/>
</dbReference>
<dbReference type="PROSITE" id="PS00178">
    <property type="entry name" value="AA_TRNA_LIGASE_I"/>
    <property type="match status" value="1"/>
</dbReference>
<accession>Q2YTH9</accession>
<gene>
    <name evidence="1" type="primary">leuS</name>
    <name type="ordered locus">SAB1618c</name>
</gene>
<protein>
    <recommendedName>
        <fullName evidence="1">Leucine--tRNA ligase</fullName>
        <ecNumber evidence="1">6.1.1.4</ecNumber>
    </recommendedName>
    <alternativeName>
        <fullName evidence="1">Leucyl-tRNA synthetase</fullName>
        <shortName evidence="1">LeuRS</shortName>
    </alternativeName>
</protein>
<evidence type="ECO:0000255" key="1">
    <source>
        <dbReference type="HAMAP-Rule" id="MF_00049"/>
    </source>
</evidence>
<comment type="catalytic activity">
    <reaction evidence="1">
        <text>tRNA(Leu) + L-leucine + ATP = L-leucyl-tRNA(Leu) + AMP + diphosphate</text>
        <dbReference type="Rhea" id="RHEA:11688"/>
        <dbReference type="Rhea" id="RHEA-COMP:9613"/>
        <dbReference type="Rhea" id="RHEA-COMP:9622"/>
        <dbReference type="ChEBI" id="CHEBI:30616"/>
        <dbReference type="ChEBI" id="CHEBI:33019"/>
        <dbReference type="ChEBI" id="CHEBI:57427"/>
        <dbReference type="ChEBI" id="CHEBI:78442"/>
        <dbReference type="ChEBI" id="CHEBI:78494"/>
        <dbReference type="ChEBI" id="CHEBI:456215"/>
        <dbReference type="EC" id="6.1.1.4"/>
    </reaction>
</comment>
<comment type="subcellular location">
    <subcellularLocation>
        <location evidence="1">Cytoplasm</location>
    </subcellularLocation>
</comment>
<comment type="similarity">
    <text evidence="1">Belongs to the class-I aminoacyl-tRNA synthetase family.</text>
</comment>
<feature type="chain" id="PRO_1000009439" description="Leucine--tRNA ligase">
    <location>
        <begin position="1"/>
        <end position="804"/>
    </location>
</feature>
<feature type="short sequence motif" description="'HIGH' region">
    <location>
        <begin position="40"/>
        <end position="51"/>
    </location>
</feature>
<feature type="short sequence motif" description="'KMSKS' region">
    <location>
        <begin position="576"/>
        <end position="580"/>
    </location>
</feature>
<feature type="binding site" evidence="1">
    <location>
        <position position="579"/>
    </location>
    <ligand>
        <name>ATP</name>
        <dbReference type="ChEBI" id="CHEBI:30616"/>
    </ligand>
</feature>
<sequence>MNYNHNQIEKKWQDYWDENKTFKTNDNLGQKKFYALDMFPYPSGAGLHVGHPEGYTATDIISRYKRMQGYNVLHPMGWDAFGLPAEQYALDTGNDPREFTKKNIQTFKRQIKELGFSYDWDREVNTTDPEYYKWTQWIFIQLYNKGLAYVDEVAVNWCPALGTVLSNEEVIDGVSERGGHPVYRKPMKQWVLKITEYADQLLADLDDLDWPESLKDMQRNWIGRSEGAKVSFDVDNTEGKVEVFTTRPDTIYGASFLVLSPEHALVNSITTDEYKEKVKAYQTEASKKSDLERTDLAKDKSGVFTGAYAINPLSGEKVQIWIADYVLSTYGTGAIMAVPAHDDRDYEFAKKFDLLIIEVIEGGNVEEAAYTGEGKHINSGELDGLENEAAITKAIQLLEQKGAGEKKVNYKLRDWLFSRQRYWGEPIPVIHWEDGTMTTVPEEELPLLLPETDEIKPSGTGESPLANIDSFVNVVDEKTGMKGRRETNTMPQWAGSCWYYLRYIDPKNENMLADPEKLKHWLPVDLYIGGVEHAVLHLLYARFWHKVLYDLGIVPTKEPFQKLFNQGMILGEGNEKMSKSKGNVINPDDIVQSHGADTLRLYEMFMGPLDAAIAWSEKGLDGSRRFLDRVWRLIVNEDGTLSSKIVTTNNKSLDKVYNQTVKKVTDDFETLGFNTAISQLMVFINECYKVDEVYKPYIEGFVKMLAPIAPHIGEELWSKLGHEESITYQPWPTYDEALLVDDEVEIVVQVNGKLRAKIKIAKDTSKEEMQEIALSNDNVKASIEGKDIMKVIAVPQKLVNIVAK</sequence>
<reference key="1">
    <citation type="journal article" date="2007" name="PLoS ONE">
        <title>Molecular correlates of host specialization in Staphylococcus aureus.</title>
        <authorList>
            <person name="Herron-Olson L."/>
            <person name="Fitzgerald J.R."/>
            <person name="Musser J.M."/>
            <person name="Kapur V."/>
        </authorList>
    </citation>
    <scope>NUCLEOTIDE SEQUENCE [LARGE SCALE GENOMIC DNA]</scope>
    <source>
        <strain>bovine RF122 / ET3-1</strain>
    </source>
</reference>
<organism>
    <name type="scientific">Staphylococcus aureus (strain bovine RF122 / ET3-1)</name>
    <dbReference type="NCBI Taxonomy" id="273036"/>
    <lineage>
        <taxon>Bacteria</taxon>
        <taxon>Bacillati</taxon>
        <taxon>Bacillota</taxon>
        <taxon>Bacilli</taxon>
        <taxon>Bacillales</taxon>
        <taxon>Staphylococcaceae</taxon>
        <taxon>Staphylococcus</taxon>
    </lineage>
</organism>
<proteinExistence type="inferred from homology"/>